<reference key="1">
    <citation type="journal article" date="1990" name="Nucleic Acids Res.">
        <title>Nucleotide sequence of the gene for elongation factor EF-1 alpha from the extreme thermophilic archaebacterium Thermococcus celer.</title>
        <authorList>
            <person name="Auer J."/>
            <person name="Spicker G."/>
            <person name="Boeck A."/>
        </authorList>
    </citation>
    <scope>NUCLEOTIDE SEQUENCE [GENOMIC DNA]</scope>
</reference>
<feature type="chain" id="PRO_0000090997" description="Elongation factor 1-alpha">
    <location>
        <begin position="1"/>
        <end position="428"/>
    </location>
</feature>
<feature type="domain" description="tr-type G">
    <location>
        <begin position="5"/>
        <end position="215"/>
    </location>
</feature>
<feature type="region of interest" description="G1" evidence="1">
    <location>
        <begin position="14"/>
        <end position="21"/>
    </location>
</feature>
<feature type="region of interest" description="G2" evidence="1">
    <location>
        <begin position="68"/>
        <end position="72"/>
    </location>
</feature>
<feature type="region of interest" description="G3" evidence="1">
    <location>
        <begin position="89"/>
        <end position="92"/>
    </location>
</feature>
<feature type="region of interest" description="G4" evidence="1">
    <location>
        <begin position="144"/>
        <end position="147"/>
    </location>
</feature>
<feature type="region of interest" description="G5" evidence="1">
    <location>
        <begin position="181"/>
        <end position="183"/>
    </location>
</feature>
<feature type="binding site" evidence="2">
    <location>
        <begin position="14"/>
        <end position="21"/>
    </location>
    <ligand>
        <name>GTP</name>
        <dbReference type="ChEBI" id="CHEBI:37565"/>
    </ligand>
</feature>
<feature type="binding site" evidence="2">
    <location>
        <position position="21"/>
    </location>
    <ligand>
        <name>Mg(2+)</name>
        <dbReference type="ChEBI" id="CHEBI:18420"/>
    </ligand>
</feature>
<feature type="binding site" evidence="2">
    <location>
        <begin position="89"/>
        <end position="93"/>
    </location>
    <ligand>
        <name>GTP</name>
        <dbReference type="ChEBI" id="CHEBI:37565"/>
    </ligand>
</feature>
<feature type="binding site" evidence="2">
    <location>
        <begin position="144"/>
        <end position="147"/>
    </location>
    <ligand>
        <name>GTP</name>
        <dbReference type="ChEBI" id="CHEBI:37565"/>
    </ligand>
</feature>
<name>EF1A_THECE</name>
<gene>
    <name evidence="2" type="primary">tuf</name>
</gene>
<dbReference type="EC" id="3.6.5.3" evidence="2"/>
<dbReference type="EMBL" id="X52383">
    <property type="protein sequence ID" value="CAA36610.1"/>
    <property type="molecule type" value="Genomic_DNA"/>
</dbReference>
<dbReference type="PIR" id="S10248">
    <property type="entry name" value="S10248"/>
</dbReference>
<dbReference type="SMR" id="P17197"/>
<dbReference type="GO" id="GO:0005737">
    <property type="term" value="C:cytoplasm"/>
    <property type="evidence" value="ECO:0007669"/>
    <property type="project" value="UniProtKB-SubCell"/>
</dbReference>
<dbReference type="GO" id="GO:0005525">
    <property type="term" value="F:GTP binding"/>
    <property type="evidence" value="ECO:0007669"/>
    <property type="project" value="UniProtKB-UniRule"/>
</dbReference>
<dbReference type="GO" id="GO:0003924">
    <property type="term" value="F:GTPase activity"/>
    <property type="evidence" value="ECO:0007669"/>
    <property type="project" value="InterPro"/>
</dbReference>
<dbReference type="GO" id="GO:0003746">
    <property type="term" value="F:translation elongation factor activity"/>
    <property type="evidence" value="ECO:0007669"/>
    <property type="project" value="UniProtKB-UniRule"/>
</dbReference>
<dbReference type="CDD" id="cd01883">
    <property type="entry name" value="EF1_alpha"/>
    <property type="match status" value="1"/>
</dbReference>
<dbReference type="CDD" id="cd03693">
    <property type="entry name" value="EF1_alpha_II"/>
    <property type="match status" value="1"/>
</dbReference>
<dbReference type="CDD" id="cd03705">
    <property type="entry name" value="EF1_alpha_III"/>
    <property type="match status" value="1"/>
</dbReference>
<dbReference type="FunFam" id="2.40.30.10:FF:000003">
    <property type="entry name" value="Elongation factor 1-alpha"/>
    <property type="match status" value="1"/>
</dbReference>
<dbReference type="FunFam" id="2.40.30.10:FF:000005">
    <property type="entry name" value="Elongation factor 1-alpha"/>
    <property type="match status" value="1"/>
</dbReference>
<dbReference type="Gene3D" id="3.40.50.300">
    <property type="entry name" value="P-loop containing nucleotide triphosphate hydrolases"/>
    <property type="match status" value="1"/>
</dbReference>
<dbReference type="Gene3D" id="2.40.30.10">
    <property type="entry name" value="Translation factors"/>
    <property type="match status" value="2"/>
</dbReference>
<dbReference type="HAMAP" id="MF_00118_A">
    <property type="entry name" value="EF_Tu_A"/>
    <property type="match status" value="1"/>
</dbReference>
<dbReference type="InterPro" id="IPR004161">
    <property type="entry name" value="EFTu-like_2"/>
</dbReference>
<dbReference type="InterPro" id="IPR031157">
    <property type="entry name" value="G_TR_CS"/>
</dbReference>
<dbReference type="InterPro" id="IPR054696">
    <property type="entry name" value="GTP-eEF1A_C"/>
</dbReference>
<dbReference type="InterPro" id="IPR027417">
    <property type="entry name" value="P-loop_NTPase"/>
</dbReference>
<dbReference type="InterPro" id="IPR005225">
    <property type="entry name" value="Small_GTP-bd"/>
</dbReference>
<dbReference type="InterPro" id="IPR000795">
    <property type="entry name" value="T_Tr_GTP-bd_dom"/>
</dbReference>
<dbReference type="InterPro" id="IPR050100">
    <property type="entry name" value="TRAFAC_GTPase_members"/>
</dbReference>
<dbReference type="InterPro" id="IPR009000">
    <property type="entry name" value="Transl_B-barrel_sf"/>
</dbReference>
<dbReference type="InterPro" id="IPR009001">
    <property type="entry name" value="Transl_elong_EF1A/Init_IF2_C"/>
</dbReference>
<dbReference type="InterPro" id="IPR004539">
    <property type="entry name" value="Transl_elong_EF1A_euk/arc"/>
</dbReference>
<dbReference type="NCBIfam" id="TIGR00483">
    <property type="entry name" value="EF-1_alpha"/>
    <property type="match status" value="1"/>
</dbReference>
<dbReference type="NCBIfam" id="NF008969">
    <property type="entry name" value="PRK12317.1"/>
    <property type="match status" value="1"/>
</dbReference>
<dbReference type="NCBIfam" id="TIGR00231">
    <property type="entry name" value="small_GTP"/>
    <property type="match status" value="1"/>
</dbReference>
<dbReference type="PANTHER" id="PTHR23115">
    <property type="entry name" value="TRANSLATION FACTOR"/>
    <property type="match status" value="1"/>
</dbReference>
<dbReference type="Pfam" id="PF22594">
    <property type="entry name" value="GTP-eEF1A_C"/>
    <property type="match status" value="1"/>
</dbReference>
<dbReference type="Pfam" id="PF00009">
    <property type="entry name" value="GTP_EFTU"/>
    <property type="match status" value="1"/>
</dbReference>
<dbReference type="Pfam" id="PF03144">
    <property type="entry name" value="GTP_EFTU_D2"/>
    <property type="match status" value="1"/>
</dbReference>
<dbReference type="PRINTS" id="PR00315">
    <property type="entry name" value="ELONGATNFCT"/>
</dbReference>
<dbReference type="SUPFAM" id="SSF50465">
    <property type="entry name" value="EF-Tu/eEF-1alpha/eIF2-gamma C-terminal domain"/>
    <property type="match status" value="1"/>
</dbReference>
<dbReference type="SUPFAM" id="SSF52540">
    <property type="entry name" value="P-loop containing nucleoside triphosphate hydrolases"/>
    <property type="match status" value="1"/>
</dbReference>
<dbReference type="SUPFAM" id="SSF50447">
    <property type="entry name" value="Translation proteins"/>
    <property type="match status" value="1"/>
</dbReference>
<dbReference type="PROSITE" id="PS00301">
    <property type="entry name" value="G_TR_1"/>
    <property type="match status" value="1"/>
</dbReference>
<dbReference type="PROSITE" id="PS51722">
    <property type="entry name" value="G_TR_2"/>
    <property type="match status" value="1"/>
</dbReference>
<keyword id="KW-0963">Cytoplasm</keyword>
<keyword id="KW-0251">Elongation factor</keyword>
<keyword id="KW-0342">GTP-binding</keyword>
<keyword id="KW-0378">Hydrolase</keyword>
<keyword id="KW-0460">Magnesium</keyword>
<keyword id="KW-0479">Metal-binding</keyword>
<keyword id="KW-0547">Nucleotide-binding</keyword>
<keyword id="KW-0648">Protein biosynthesis</keyword>
<proteinExistence type="inferred from homology"/>
<accession>P17197</accession>
<sequence length="428" mass="47505">MAKEKPHINIVFIGHVDHGKSTTIGRLLFDTANIPENIIKKFEEMGEKGKSFKFAWVMDRLKEERERGITIDVAHTKFETPHRYITIIDAPGHRDFVKNMITGASQADAAVLVVAVTDGVMPQTKEHAFLARTLGINNILVAVNKMDMVNYDEKKFKAVAEQVKKLLMMLGYKNFPIIPISAWEGDNVVKKSDKMPWYNGPTLIEALDQMPEPPKPTDKPLRIPIQDVYSIKGVGTVPVGRVETGVLRVGDVVIFEPASTIFHKPIQGEVKSIEMHHEPMQEALPGDNIGFNVRGVGKNDIKRGDVAGHTNNPPTVVRPKDTFKAQIIVLNHPTAITVGYTPVLHAHTLQVAVRFEQLLAKLDPRTGNIVEENPQFIKTGDSAIVVLRPTKPMVIEPVKEIPQMGRFAIRDMGQTVAAGMVISIQKAE</sequence>
<organism>
    <name type="scientific">Thermococcus celer</name>
    <dbReference type="NCBI Taxonomy" id="2264"/>
    <lineage>
        <taxon>Archaea</taxon>
        <taxon>Methanobacteriati</taxon>
        <taxon>Methanobacteriota</taxon>
        <taxon>Thermococci</taxon>
        <taxon>Thermococcales</taxon>
        <taxon>Thermococcaceae</taxon>
        <taxon>Thermococcus</taxon>
    </lineage>
</organism>
<comment type="function">
    <text evidence="2">GTP hydrolase that promotes the GTP-dependent binding of aminoacyl-tRNA to the A-site of ribosomes during protein biosynthesis.</text>
</comment>
<comment type="catalytic activity">
    <reaction evidence="2">
        <text>GTP + H2O = GDP + phosphate + H(+)</text>
        <dbReference type="Rhea" id="RHEA:19669"/>
        <dbReference type="ChEBI" id="CHEBI:15377"/>
        <dbReference type="ChEBI" id="CHEBI:15378"/>
        <dbReference type="ChEBI" id="CHEBI:37565"/>
        <dbReference type="ChEBI" id="CHEBI:43474"/>
        <dbReference type="ChEBI" id="CHEBI:58189"/>
        <dbReference type="EC" id="3.6.5.3"/>
    </reaction>
    <physiologicalReaction direction="left-to-right" evidence="2">
        <dbReference type="Rhea" id="RHEA:19670"/>
    </physiologicalReaction>
</comment>
<comment type="subcellular location">
    <subcellularLocation>
        <location evidence="2">Cytoplasm</location>
    </subcellularLocation>
</comment>
<comment type="similarity">
    <text evidence="2">Belongs to the TRAFAC class translation factor GTPase superfamily. Classic translation factor GTPase family. EF-Tu/EF-1A subfamily.</text>
</comment>
<protein>
    <recommendedName>
        <fullName evidence="2">Elongation factor 1-alpha</fullName>
        <shortName evidence="2">EF-1-alpha</shortName>
        <ecNumber evidence="2">3.6.5.3</ecNumber>
    </recommendedName>
    <alternativeName>
        <fullName evidence="2">Elongation factor Tu</fullName>
        <shortName evidence="2">EF-Tu</shortName>
    </alternativeName>
</protein>
<evidence type="ECO:0000250" key="1"/>
<evidence type="ECO:0000255" key="2">
    <source>
        <dbReference type="HAMAP-Rule" id="MF_00118"/>
    </source>
</evidence>